<keyword id="KW-0227">DNA damage</keyword>
<keyword id="KW-0234">DNA repair</keyword>
<keyword id="KW-0235">DNA replication</keyword>
<keyword id="KW-0436">Ligase</keyword>
<keyword id="KW-0460">Magnesium</keyword>
<keyword id="KW-0464">Manganese</keyword>
<keyword id="KW-0479">Metal-binding</keyword>
<keyword id="KW-0520">NAD</keyword>
<keyword id="KW-0862">Zinc</keyword>
<proteinExistence type="inferred from homology"/>
<organism>
    <name type="scientific">Wolbachia pipientis subsp. Culex pipiens (strain wPip)</name>
    <dbReference type="NCBI Taxonomy" id="570417"/>
    <lineage>
        <taxon>Bacteria</taxon>
        <taxon>Pseudomonadati</taxon>
        <taxon>Pseudomonadota</taxon>
        <taxon>Alphaproteobacteria</taxon>
        <taxon>Rickettsiales</taxon>
        <taxon>Anaplasmataceae</taxon>
        <taxon>Wolbachieae</taxon>
        <taxon>Wolbachia</taxon>
    </lineage>
</organism>
<name>DNLJ_WOLPP</name>
<sequence length="651" mass="73489">MTDLEKMREKLQNQINYHNILYYQKSKPEISDAEYDELKKKLAAIEPEAYATQDSVGAPPDERFSKVEHQEPMLSLENAYDEQGVEKFLSKIKRFLIADEIEILCEPKIDGLSFSAIYEDGKFVKAATRGDGFVGEDVTHNVATIKGFPKFLQDVQGRLEVRGEIYISNSDFLKLNENNEFANPRNAAAGSLKQLNANITAKRPLRYFAYSLIGGIEKSQSEVLEKLEKLGFCVNEHRSLTSSLNGMLKFYNEIYDCRYNLDYDIDGIVYKVNDLVLQSRLGSTHKAPRSALAYKFSAIYAKTKLNKIFIQVGRTGVLTPVADLVPVNIGGVLVSRASLHNQDEIKRKDIREGDVVTIKRAGDVIPQIVKVDEGSRHTNMPEFVFPDICPECGSKVQIEGVAVRCPEEFNCKAQIVEKLKHFVSKDAFDIVGLGEKQIKFFYDLELIRQIPDIFILEERLKEFSLKEHHGWGEKSIANLLSAIQSRRVISLDRFIFSLGIRFIGQVVAELLANYYVSYDNWYNSMSSNDVELVGIDGIGEKVAESLKSFFSQERNIKMLNDLTAYLQILPVSSNSSDSFLNNKIIVFTGKLRAMSRGEAKVRAKVLGAKISSSLSTKTDYLIAGEDPGSKYKKAMELGVEILDEEQWNRLC</sequence>
<protein>
    <recommendedName>
        <fullName evidence="1">DNA ligase</fullName>
        <ecNumber evidence="1">6.5.1.2</ecNumber>
    </recommendedName>
    <alternativeName>
        <fullName evidence="1">Polydeoxyribonucleotide synthase [NAD(+)]</fullName>
    </alternativeName>
</protein>
<comment type="function">
    <text evidence="1">DNA ligase that catalyzes the formation of phosphodiester linkages between 5'-phosphoryl and 3'-hydroxyl groups in double-stranded DNA using NAD as a coenzyme and as the energy source for the reaction. It is essential for DNA replication and repair of damaged DNA.</text>
</comment>
<comment type="catalytic activity">
    <reaction evidence="1">
        <text>NAD(+) + (deoxyribonucleotide)n-3'-hydroxyl + 5'-phospho-(deoxyribonucleotide)m = (deoxyribonucleotide)n+m + AMP + beta-nicotinamide D-nucleotide.</text>
        <dbReference type="EC" id="6.5.1.2"/>
    </reaction>
</comment>
<comment type="cofactor">
    <cofactor evidence="1">
        <name>Mg(2+)</name>
        <dbReference type="ChEBI" id="CHEBI:18420"/>
    </cofactor>
    <cofactor evidence="1">
        <name>Mn(2+)</name>
        <dbReference type="ChEBI" id="CHEBI:29035"/>
    </cofactor>
</comment>
<comment type="similarity">
    <text evidence="1">Belongs to the NAD-dependent DNA ligase family. LigA subfamily.</text>
</comment>
<feature type="chain" id="PRO_0000380507" description="DNA ligase">
    <location>
        <begin position="1"/>
        <end position="651"/>
    </location>
</feature>
<feature type="domain" description="BRCT" evidence="1">
    <location>
        <begin position="575"/>
        <end position="651"/>
    </location>
</feature>
<feature type="active site" description="N6-AMP-lysine intermediate" evidence="1">
    <location>
        <position position="108"/>
    </location>
</feature>
<feature type="binding site" evidence="1">
    <location>
        <begin position="32"/>
        <end position="36"/>
    </location>
    <ligand>
        <name>NAD(+)</name>
        <dbReference type="ChEBI" id="CHEBI:57540"/>
    </ligand>
</feature>
<feature type="binding site" evidence="1">
    <location>
        <begin position="75"/>
        <end position="76"/>
    </location>
    <ligand>
        <name>NAD(+)</name>
        <dbReference type="ChEBI" id="CHEBI:57540"/>
    </ligand>
</feature>
<feature type="binding site" evidence="1">
    <location>
        <position position="106"/>
    </location>
    <ligand>
        <name>NAD(+)</name>
        <dbReference type="ChEBI" id="CHEBI:57540"/>
    </ligand>
</feature>
<feature type="binding site" evidence="1">
    <location>
        <position position="129"/>
    </location>
    <ligand>
        <name>NAD(+)</name>
        <dbReference type="ChEBI" id="CHEBI:57540"/>
    </ligand>
</feature>
<feature type="binding site" evidence="1">
    <location>
        <position position="164"/>
    </location>
    <ligand>
        <name>NAD(+)</name>
        <dbReference type="ChEBI" id="CHEBI:57540"/>
    </ligand>
</feature>
<feature type="binding site" evidence="1">
    <location>
        <position position="271"/>
    </location>
    <ligand>
        <name>NAD(+)</name>
        <dbReference type="ChEBI" id="CHEBI:57540"/>
    </ligand>
</feature>
<feature type="binding site" evidence="1">
    <location>
        <position position="295"/>
    </location>
    <ligand>
        <name>NAD(+)</name>
        <dbReference type="ChEBI" id="CHEBI:57540"/>
    </ligand>
</feature>
<feature type="binding site" evidence="1">
    <location>
        <position position="389"/>
    </location>
    <ligand>
        <name>Zn(2+)</name>
        <dbReference type="ChEBI" id="CHEBI:29105"/>
    </ligand>
</feature>
<feature type="binding site" evidence="1">
    <location>
        <position position="392"/>
    </location>
    <ligand>
        <name>Zn(2+)</name>
        <dbReference type="ChEBI" id="CHEBI:29105"/>
    </ligand>
</feature>
<feature type="binding site" evidence="1">
    <location>
        <position position="405"/>
    </location>
    <ligand>
        <name>Zn(2+)</name>
        <dbReference type="ChEBI" id="CHEBI:29105"/>
    </ligand>
</feature>
<feature type="binding site" evidence="1">
    <location>
        <position position="411"/>
    </location>
    <ligand>
        <name>Zn(2+)</name>
        <dbReference type="ChEBI" id="CHEBI:29105"/>
    </ligand>
</feature>
<gene>
    <name evidence="1" type="primary">ligA</name>
    <name type="ordered locus">WP0466</name>
</gene>
<reference key="1">
    <citation type="journal article" date="2008" name="Mol. Biol. Evol.">
        <title>Genome evolution of Wolbachia strain wPip from the Culex pipiens group.</title>
        <authorList>
            <person name="Klasson L."/>
            <person name="Walker T."/>
            <person name="Sebaihia M."/>
            <person name="Sanders M.J."/>
            <person name="Quail M.A."/>
            <person name="Lord A."/>
            <person name="Sanders S."/>
            <person name="Earl J."/>
            <person name="O'Neill S.L."/>
            <person name="Thomson N."/>
            <person name="Sinkins S.P."/>
            <person name="Parkhill J."/>
        </authorList>
    </citation>
    <scope>NUCLEOTIDE SEQUENCE [LARGE SCALE GENOMIC DNA]</scope>
    <source>
        <strain>wPip</strain>
    </source>
</reference>
<accession>B3CPS1</accession>
<dbReference type="EC" id="6.5.1.2" evidence="1"/>
<dbReference type="EMBL" id="AM999887">
    <property type="protein sequence ID" value="CAQ54574.1"/>
    <property type="molecule type" value="Genomic_DNA"/>
</dbReference>
<dbReference type="RefSeq" id="WP_007301909.1">
    <property type="nucleotide sequence ID" value="NC_010981.1"/>
</dbReference>
<dbReference type="SMR" id="B3CPS1"/>
<dbReference type="KEGG" id="wpi:WP0466"/>
<dbReference type="eggNOG" id="COG0272">
    <property type="taxonomic scope" value="Bacteria"/>
</dbReference>
<dbReference type="HOGENOM" id="CLU_007764_2_1_5"/>
<dbReference type="Proteomes" id="UP000008814">
    <property type="component" value="Chromosome"/>
</dbReference>
<dbReference type="GO" id="GO:0005829">
    <property type="term" value="C:cytosol"/>
    <property type="evidence" value="ECO:0007669"/>
    <property type="project" value="TreeGrafter"/>
</dbReference>
<dbReference type="GO" id="GO:0003911">
    <property type="term" value="F:DNA ligase (NAD+) activity"/>
    <property type="evidence" value="ECO:0007669"/>
    <property type="project" value="UniProtKB-UniRule"/>
</dbReference>
<dbReference type="GO" id="GO:0046872">
    <property type="term" value="F:metal ion binding"/>
    <property type="evidence" value="ECO:0007669"/>
    <property type="project" value="UniProtKB-KW"/>
</dbReference>
<dbReference type="GO" id="GO:0006281">
    <property type="term" value="P:DNA repair"/>
    <property type="evidence" value="ECO:0007669"/>
    <property type="project" value="UniProtKB-KW"/>
</dbReference>
<dbReference type="GO" id="GO:0006260">
    <property type="term" value="P:DNA replication"/>
    <property type="evidence" value="ECO:0007669"/>
    <property type="project" value="UniProtKB-KW"/>
</dbReference>
<dbReference type="CDD" id="cd17748">
    <property type="entry name" value="BRCT_DNA_ligase_like"/>
    <property type="match status" value="1"/>
</dbReference>
<dbReference type="CDD" id="cd00114">
    <property type="entry name" value="LIGANc"/>
    <property type="match status" value="1"/>
</dbReference>
<dbReference type="FunFam" id="2.40.50.140:FF:000012">
    <property type="entry name" value="DNA ligase"/>
    <property type="match status" value="1"/>
</dbReference>
<dbReference type="Gene3D" id="6.20.10.30">
    <property type="match status" value="1"/>
</dbReference>
<dbReference type="Gene3D" id="1.10.150.20">
    <property type="entry name" value="5' to 3' exonuclease, C-terminal subdomain"/>
    <property type="match status" value="2"/>
</dbReference>
<dbReference type="Gene3D" id="3.40.50.10190">
    <property type="entry name" value="BRCT domain"/>
    <property type="match status" value="1"/>
</dbReference>
<dbReference type="Gene3D" id="3.30.470.30">
    <property type="entry name" value="DNA ligase/mRNA capping enzyme"/>
    <property type="match status" value="1"/>
</dbReference>
<dbReference type="Gene3D" id="1.10.287.610">
    <property type="entry name" value="Helix hairpin bin"/>
    <property type="match status" value="1"/>
</dbReference>
<dbReference type="Gene3D" id="2.40.50.140">
    <property type="entry name" value="Nucleic acid-binding proteins"/>
    <property type="match status" value="1"/>
</dbReference>
<dbReference type="HAMAP" id="MF_01588">
    <property type="entry name" value="DNA_ligase_A"/>
    <property type="match status" value="1"/>
</dbReference>
<dbReference type="InterPro" id="IPR001357">
    <property type="entry name" value="BRCT_dom"/>
</dbReference>
<dbReference type="InterPro" id="IPR036420">
    <property type="entry name" value="BRCT_dom_sf"/>
</dbReference>
<dbReference type="InterPro" id="IPR041663">
    <property type="entry name" value="DisA/LigA_HHH"/>
</dbReference>
<dbReference type="InterPro" id="IPR001679">
    <property type="entry name" value="DNA_ligase"/>
</dbReference>
<dbReference type="InterPro" id="IPR018239">
    <property type="entry name" value="DNA_ligase_AS"/>
</dbReference>
<dbReference type="InterPro" id="IPR033136">
    <property type="entry name" value="DNA_ligase_CS"/>
</dbReference>
<dbReference type="InterPro" id="IPR013839">
    <property type="entry name" value="DNAligase_adenylation"/>
</dbReference>
<dbReference type="InterPro" id="IPR013840">
    <property type="entry name" value="DNAligase_N"/>
</dbReference>
<dbReference type="InterPro" id="IPR012340">
    <property type="entry name" value="NA-bd_OB-fold"/>
</dbReference>
<dbReference type="InterPro" id="IPR004150">
    <property type="entry name" value="NAD_DNA_ligase_OB"/>
</dbReference>
<dbReference type="InterPro" id="IPR010994">
    <property type="entry name" value="RuvA_2-like"/>
</dbReference>
<dbReference type="NCBIfam" id="TIGR00575">
    <property type="entry name" value="dnlj"/>
    <property type="match status" value="1"/>
</dbReference>
<dbReference type="NCBIfam" id="NF005932">
    <property type="entry name" value="PRK07956.1"/>
    <property type="match status" value="1"/>
</dbReference>
<dbReference type="PANTHER" id="PTHR23389">
    <property type="entry name" value="CHROMOSOME TRANSMISSION FIDELITY FACTOR 18"/>
    <property type="match status" value="1"/>
</dbReference>
<dbReference type="PANTHER" id="PTHR23389:SF9">
    <property type="entry name" value="DNA LIGASE"/>
    <property type="match status" value="1"/>
</dbReference>
<dbReference type="Pfam" id="PF00533">
    <property type="entry name" value="BRCT"/>
    <property type="match status" value="1"/>
</dbReference>
<dbReference type="Pfam" id="PF01653">
    <property type="entry name" value="DNA_ligase_aden"/>
    <property type="match status" value="1"/>
</dbReference>
<dbReference type="Pfam" id="PF03120">
    <property type="entry name" value="DNA_ligase_OB"/>
    <property type="match status" value="1"/>
</dbReference>
<dbReference type="Pfam" id="PF12826">
    <property type="entry name" value="HHH_2"/>
    <property type="match status" value="1"/>
</dbReference>
<dbReference type="Pfam" id="PF22745">
    <property type="entry name" value="Nlig-Ia"/>
    <property type="match status" value="1"/>
</dbReference>
<dbReference type="PIRSF" id="PIRSF001604">
    <property type="entry name" value="LigA"/>
    <property type="match status" value="1"/>
</dbReference>
<dbReference type="SMART" id="SM00292">
    <property type="entry name" value="BRCT"/>
    <property type="match status" value="1"/>
</dbReference>
<dbReference type="SMART" id="SM00532">
    <property type="entry name" value="LIGANc"/>
    <property type="match status" value="1"/>
</dbReference>
<dbReference type="SUPFAM" id="SSF52113">
    <property type="entry name" value="BRCT domain"/>
    <property type="match status" value="1"/>
</dbReference>
<dbReference type="SUPFAM" id="SSF56091">
    <property type="entry name" value="DNA ligase/mRNA capping enzyme, catalytic domain"/>
    <property type="match status" value="1"/>
</dbReference>
<dbReference type="SUPFAM" id="SSF50249">
    <property type="entry name" value="Nucleic acid-binding proteins"/>
    <property type="match status" value="1"/>
</dbReference>
<dbReference type="SUPFAM" id="SSF47781">
    <property type="entry name" value="RuvA domain 2-like"/>
    <property type="match status" value="1"/>
</dbReference>
<dbReference type="PROSITE" id="PS50172">
    <property type="entry name" value="BRCT"/>
    <property type="match status" value="1"/>
</dbReference>
<dbReference type="PROSITE" id="PS01055">
    <property type="entry name" value="DNA_LIGASE_N1"/>
    <property type="match status" value="1"/>
</dbReference>
<dbReference type="PROSITE" id="PS01056">
    <property type="entry name" value="DNA_LIGASE_N2"/>
    <property type="match status" value="1"/>
</dbReference>
<evidence type="ECO:0000255" key="1">
    <source>
        <dbReference type="HAMAP-Rule" id="MF_01588"/>
    </source>
</evidence>